<dbReference type="EC" id="1.1.1.85" evidence="1"/>
<dbReference type="EMBL" id="CP000249">
    <property type="protein sequence ID" value="ABD12984.1"/>
    <property type="molecule type" value="Genomic_DNA"/>
</dbReference>
<dbReference type="RefSeq" id="WP_011438008.1">
    <property type="nucleotide sequence ID" value="NZ_JENI01000005.1"/>
</dbReference>
<dbReference type="SMR" id="Q2J6V8"/>
<dbReference type="STRING" id="106370.Francci3_3632"/>
<dbReference type="KEGG" id="fra:Francci3_3632"/>
<dbReference type="eggNOG" id="COG0473">
    <property type="taxonomic scope" value="Bacteria"/>
</dbReference>
<dbReference type="HOGENOM" id="CLU_031953_0_1_11"/>
<dbReference type="OrthoDB" id="5289857at2"/>
<dbReference type="PhylomeDB" id="Q2J6V8"/>
<dbReference type="UniPathway" id="UPA00048">
    <property type="reaction ID" value="UER00072"/>
</dbReference>
<dbReference type="Proteomes" id="UP000001937">
    <property type="component" value="Chromosome"/>
</dbReference>
<dbReference type="GO" id="GO:0005737">
    <property type="term" value="C:cytoplasm"/>
    <property type="evidence" value="ECO:0007669"/>
    <property type="project" value="UniProtKB-SubCell"/>
</dbReference>
<dbReference type="GO" id="GO:0003862">
    <property type="term" value="F:3-isopropylmalate dehydrogenase activity"/>
    <property type="evidence" value="ECO:0007669"/>
    <property type="project" value="UniProtKB-UniRule"/>
</dbReference>
<dbReference type="GO" id="GO:0000287">
    <property type="term" value="F:magnesium ion binding"/>
    <property type="evidence" value="ECO:0007669"/>
    <property type="project" value="InterPro"/>
</dbReference>
<dbReference type="GO" id="GO:0051287">
    <property type="term" value="F:NAD binding"/>
    <property type="evidence" value="ECO:0007669"/>
    <property type="project" value="InterPro"/>
</dbReference>
<dbReference type="GO" id="GO:0009098">
    <property type="term" value="P:L-leucine biosynthetic process"/>
    <property type="evidence" value="ECO:0007669"/>
    <property type="project" value="UniProtKB-UniRule"/>
</dbReference>
<dbReference type="Gene3D" id="3.40.718.10">
    <property type="entry name" value="Isopropylmalate Dehydrogenase"/>
    <property type="match status" value="1"/>
</dbReference>
<dbReference type="HAMAP" id="MF_01035">
    <property type="entry name" value="LeuB_type2"/>
    <property type="match status" value="1"/>
</dbReference>
<dbReference type="InterPro" id="IPR050501">
    <property type="entry name" value="ICDH/IPMDH"/>
</dbReference>
<dbReference type="InterPro" id="IPR019818">
    <property type="entry name" value="IsoCit/isopropylmalate_DH_CS"/>
</dbReference>
<dbReference type="InterPro" id="IPR024084">
    <property type="entry name" value="IsoPropMal-DH-like_dom"/>
</dbReference>
<dbReference type="InterPro" id="IPR023698">
    <property type="entry name" value="LeuB_actb"/>
</dbReference>
<dbReference type="NCBIfam" id="NF002898">
    <property type="entry name" value="PRK03437.1"/>
    <property type="match status" value="1"/>
</dbReference>
<dbReference type="PANTHER" id="PTHR43275">
    <property type="entry name" value="D-MALATE DEHYDROGENASE [DECARBOXYLATING]"/>
    <property type="match status" value="1"/>
</dbReference>
<dbReference type="PANTHER" id="PTHR43275:SF1">
    <property type="entry name" value="D-MALATE DEHYDROGENASE [DECARBOXYLATING]"/>
    <property type="match status" value="1"/>
</dbReference>
<dbReference type="Pfam" id="PF00180">
    <property type="entry name" value="Iso_dh"/>
    <property type="match status" value="1"/>
</dbReference>
<dbReference type="SMART" id="SM01329">
    <property type="entry name" value="Iso_dh"/>
    <property type="match status" value="1"/>
</dbReference>
<dbReference type="SUPFAM" id="SSF53659">
    <property type="entry name" value="Isocitrate/Isopropylmalate dehydrogenase-like"/>
    <property type="match status" value="1"/>
</dbReference>
<dbReference type="PROSITE" id="PS00470">
    <property type="entry name" value="IDH_IMDH"/>
    <property type="match status" value="1"/>
</dbReference>
<feature type="chain" id="PRO_0000249884" description="3-isopropylmalate dehydrogenase">
    <location>
        <begin position="1"/>
        <end position="342"/>
    </location>
</feature>
<feature type="region of interest" description="Disordered" evidence="2">
    <location>
        <begin position="319"/>
        <end position="342"/>
    </location>
</feature>
<feature type="compositionally biased region" description="Low complexity" evidence="2">
    <location>
        <begin position="319"/>
        <end position="328"/>
    </location>
</feature>
<feature type="compositionally biased region" description="Basic and acidic residues" evidence="2">
    <location>
        <begin position="329"/>
        <end position="342"/>
    </location>
</feature>
<feature type="binding site" evidence="1">
    <location>
        <position position="87"/>
    </location>
    <ligand>
        <name>substrate</name>
    </ligand>
</feature>
<feature type="binding site" evidence="1">
    <location>
        <position position="97"/>
    </location>
    <ligand>
        <name>substrate</name>
    </ligand>
</feature>
<feature type="binding site" evidence="1">
    <location>
        <position position="121"/>
    </location>
    <ligand>
        <name>substrate</name>
    </ligand>
</feature>
<feature type="binding site" evidence="1">
    <location>
        <position position="212"/>
    </location>
    <ligand>
        <name>Mg(2+)</name>
        <dbReference type="ChEBI" id="CHEBI:18420"/>
    </ligand>
</feature>
<feature type="binding site" evidence="1">
    <location>
        <position position="212"/>
    </location>
    <ligand>
        <name>substrate</name>
    </ligand>
</feature>
<feature type="binding site" evidence="1">
    <location>
        <position position="236"/>
    </location>
    <ligand>
        <name>Mg(2+)</name>
        <dbReference type="ChEBI" id="CHEBI:18420"/>
    </ligand>
</feature>
<feature type="binding site" evidence="1">
    <location>
        <position position="240"/>
    </location>
    <ligand>
        <name>Mg(2+)</name>
        <dbReference type="ChEBI" id="CHEBI:18420"/>
    </ligand>
</feature>
<feature type="binding site" evidence="1">
    <location>
        <begin position="272"/>
        <end position="284"/>
    </location>
    <ligand>
        <name>NAD(+)</name>
        <dbReference type="ChEBI" id="CHEBI:57540"/>
    </ligand>
</feature>
<feature type="site" description="Important for catalysis" evidence="1">
    <location>
        <position position="128"/>
    </location>
</feature>
<feature type="site" description="Important for catalysis" evidence="1">
    <location>
        <position position="179"/>
    </location>
</feature>
<protein>
    <recommendedName>
        <fullName evidence="1">3-isopropylmalate dehydrogenase</fullName>
        <ecNumber evidence="1">1.1.1.85</ecNumber>
    </recommendedName>
    <alternativeName>
        <fullName evidence="1">3-IPM-DH</fullName>
    </alternativeName>
    <alternativeName>
        <fullName evidence="1">Beta-IPM dehydrogenase</fullName>
        <shortName evidence="1">IMDH</shortName>
    </alternativeName>
</protein>
<gene>
    <name evidence="1" type="primary">leuB</name>
    <name type="ordered locus">Francci3_3632</name>
</gene>
<accession>Q2J6V8</accession>
<keyword id="KW-0028">Amino-acid biosynthesis</keyword>
<keyword id="KW-0100">Branched-chain amino acid biosynthesis</keyword>
<keyword id="KW-0963">Cytoplasm</keyword>
<keyword id="KW-0432">Leucine biosynthesis</keyword>
<keyword id="KW-0460">Magnesium</keyword>
<keyword id="KW-0464">Manganese</keyword>
<keyword id="KW-0479">Metal-binding</keyword>
<keyword id="KW-0520">NAD</keyword>
<keyword id="KW-0560">Oxidoreductase</keyword>
<keyword id="KW-1185">Reference proteome</keyword>
<evidence type="ECO:0000255" key="1">
    <source>
        <dbReference type="HAMAP-Rule" id="MF_01035"/>
    </source>
</evidence>
<evidence type="ECO:0000256" key="2">
    <source>
        <dbReference type="SAM" id="MobiDB-lite"/>
    </source>
</evidence>
<proteinExistence type="inferred from homology"/>
<reference key="1">
    <citation type="journal article" date="2007" name="Genome Res.">
        <title>Genome characteristics of facultatively symbiotic Frankia sp. strains reflect host range and host plant biogeography.</title>
        <authorList>
            <person name="Normand P."/>
            <person name="Lapierre P."/>
            <person name="Tisa L.S."/>
            <person name="Gogarten J.P."/>
            <person name="Alloisio N."/>
            <person name="Bagnarol E."/>
            <person name="Bassi C.A."/>
            <person name="Berry A.M."/>
            <person name="Bickhart D.M."/>
            <person name="Choisne N."/>
            <person name="Couloux A."/>
            <person name="Cournoyer B."/>
            <person name="Cruveiller S."/>
            <person name="Daubin V."/>
            <person name="Demange N."/>
            <person name="Francino M.P."/>
            <person name="Goltsman E."/>
            <person name="Huang Y."/>
            <person name="Kopp O.R."/>
            <person name="Labarre L."/>
            <person name="Lapidus A."/>
            <person name="Lavire C."/>
            <person name="Marechal J."/>
            <person name="Martinez M."/>
            <person name="Mastronunzio J.E."/>
            <person name="Mullin B.C."/>
            <person name="Niemann J."/>
            <person name="Pujic P."/>
            <person name="Rawnsley T."/>
            <person name="Rouy Z."/>
            <person name="Schenowitz C."/>
            <person name="Sellstedt A."/>
            <person name="Tavares F."/>
            <person name="Tomkins J.P."/>
            <person name="Vallenet D."/>
            <person name="Valverde C."/>
            <person name="Wall L.G."/>
            <person name="Wang Y."/>
            <person name="Medigue C."/>
            <person name="Benson D.R."/>
        </authorList>
    </citation>
    <scope>NUCLEOTIDE SEQUENCE [LARGE SCALE GENOMIC DNA]</scope>
    <source>
        <strain>DSM 45818 / CECT 9043 / HFP020203 / CcI3</strain>
    </source>
</reference>
<organism>
    <name type="scientific">Frankia casuarinae (strain DSM 45818 / CECT 9043 / HFP020203 / CcI3)</name>
    <dbReference type="NCBI Taxonomy" id="106370"/>
    <lineage>
        <taxon>Bacteria</taxon>
        <taxon>Bacillati</taxon>
        <taxon>Actinomycetota</taxon>
        <taxon>Actinomycetes</taxon>
        <taxon>Frankiales</taxon>
        <taxon>Frankiaceae</taxon>
        <taxon>Frankia</taxon>
    </lineage>
</organism>
<comment type="function">
    <text evidence="1">Catalyzes the oxidation of 3-carboxy-2-hydroxy-4-methylpentanoate (3-isopropylmalate) to 3-carboxy-4-methyl-2-oxopentanoate. The product decarboxylates to 4-methyl-2 oxopentanoate.</text>
</comment>
<comment type="catalytic activity">
    <reaction evidence="1">
        <text>(2R,3S)-3-isopropylmalate + NAD(+) = 4-methyl-2-oxopentanoate + CO2 + NADH</text>
        <dbReference type="Rhea" id="RHEA:32271"/>
        <dbReference type="ChEBI" id="CHEBI:16526"/>
        <dbReference type="ChEBI" id="CHEBI:17865"/>
        <dbReference type="ChEBI" id="CHEBI:35121"/>
        <dbReference type="ChEBI" id="CHEBI:57540"/>
        <dbReference type="ChEBI" id="CHEBI:57945"/>
        <dbReference type="EC" id="1.1.1.85"/>
    </reaction>
</comment>
<comment type="cofactor">
    <cofactor evidence="1">
        <name>Mg(2+)</name>
        <dbReference type="ChEBI" id="CHEBI:18420"/>
    </cofactor>
    <cofactor evidence="1">
        <name>Mn(2+)</name>
        <dbReference type="ChEBI" id="CHEBI:29035"/>
    </cofactor>
    <text evidence="1">Binds 1 Mg(2+) or Mn(2+) ion per subunit.</text>
</comment>
<comment type="pathway">
    <text evidence="1">Amino-acid biosynthesis; L-leucine biosynthesis; L-leucine from 3-methyl-2-oxobutanoate: step 3/4.</text>
</comment>
<comment type="subunit">
    <text evidence="1">Homodimer.</text>
</comment>
<comment type="subcellular location">
    <subcellularLocation>
        <location evidence="1">Cytoplasm</location>
    </subcellularLocation>
</comment>
<comment type="similarity">
    <text evidence="1">Belongs to the isocitrate and isopropylmalate dehydrogenases family. LeuB type 2 subfamily.</text>
</comment>
<sequence>MRLAVIGGDGIGPEVVAEGLRVLRAVHPKVDTTEYDLGARRWHETGETLPDSVLEELRGHDAILLGAVGDPGVPSGVLERGLLLRLRFEFDHHVNLRPVRLYPGVRSPLAGDPAIDMIVVREGTEGPYAGAGGVLRKGTPHEVATEESLNTRYGVERVVRDAFRRADRRERRHLTLVHKNNVLTKAGDLWSRTVAEVAPEFPDVRVDYQHVDAASMFFVTDPGRFDVVVTDNMFGDILTDIGAAITGGIGLAASGNLDPSGVHPSMFEPVHGSAPDIAGRQLADPTATVASVAMLLDHLGHAEEAAKVEAAVASSLADRAAAGAAQPSTRERGEDLAARAAG</sequence>
<name>LEU3_FRACC</name>